<gene>
    <name evidence="1" type="primary">rev</name>
</gene>
<organism>
    <name type="scientific">Human immunodeficiency virus type 1 group M subtype G (isolate 92NG083)</name>
    <name type="common">HIV-1</name>
    <dbReference type="NCBI Taxonomy" id="388825"/>
    <lineage>
        <taxon>Viruses</taxon>
        <taxon>Riboviria</taxon>
        <taxon>Pararnavirae</taxon>
        <taxon>Artverviricota</taxon>
        <taxon>Revtraviricetes</taxon>
        <taxon>Ortervirales</taxon>
        <taxon>Retroviridae</taxon>
        <taxon>Orthoretrovirinae</taxon>
        <taxon>Lentivirus</taxon>
        <taxon>Human immunodeficiency virus type 1</taxon>
    </lineage>
</organism>
<evidence type="ECO:0000255" key="1">
    <source>
        <dbReference type="HAMAP-Rule" id="MF_04077"/>
    </source>
</evidence>
<evidence type="ECO:0000256" key="2">
    <source>
        <dbReference type="SAM" id="MobiDB-lite"/>
    </source>
</evidence>
<comment type="function">
    <text evidence="1">Escorts unspliced or incompletely spliced viral pre-mRNAs (late transcripts) out of the nucleus of infected cells. These pre-mRNAs carry a recognition sequence called Rev responsive element (RRE) located in the env gene, that is not present in fully spliced viral mRNAs (early transcripts). This function is essential since most viral proteins are translated from unspliced or partially spliced pre-mRNAs which cannot exit the nucleus by the pathway used by fully processed cellular mRNAs. Rev itself is translated from a fully spliced mRNA that readily exits the nucleus. Rev's nuclear localization signal (NLS) binds directly to KPNB1/Importin beta-1 without previous binding to KPNA1/Importin alpha-1. KPNB1 binds to the GDP bound form of RAN (Ran-GDP) and targets Rev to the nucleus. In the nucleus, the conversion from Ran-GDP to Ran-GTP dissociates Rev from KPNB1 and allows Rev's binding to the RRE in viral pre-mRNAs. Rev multimerization on the RRE via cooperative assembly exposes its nuclear export signal (NES) to the surface. Rev can then form a complex with XPO1/CRM1 and Ran-GTP, leading to nuclear export of the complex. Conversion from Ran-GTP to Ran-GDP mediates dissociation of the Rev/RRE/XPO1/RAN complex, so that Rev can return to the nucleus for a subsequent round of export. Beside KPNB1, also seems to interact with TNPO1/Transportin-1, RANBP5/IPO5 and IPO7/RANBP7 for nuclear import. The nucleoporin-like HRB/RIP is an essential cofactor that probably indirectly interacts with Rev to release HIV RNAs from the perinuclear region to the cytoplasm.</text>
</comment>
<comment type="subunit">
    <text evidence="1">Homomultimer; when bound to the RRE. Multimeric assembly is essential for activity and may involve XPO1. Binds to human KPNB1, XPO1, TNPO1, RANBP5 and IPO7. Interacts with the viral Integrase. Interacts with human KHDRBS1. Interacts with human NAP1; this interaction decreases Rev multimerization and stimulates its activity. Interacts with human DEAD-box helicases DDX3 and DDX24; these interactions may serve for viral RNA export to the cytoplasm and packaging, respectively. Interacts with human PSIP1; this interaction may inhibit HIV-1 DNA integration by promoting dissociation of the Integrase-LEDGF/p75 complex.</text>
</comment>
<comment type="subcellular location">
    <subcellularLocation>
        <location evidence="1">Host nucleus</location>
        <location evidence="1">Host nucleolus</location>
    </subcellularLocation>
    <subcellularLocation>
        <location evidence="1">Host cytoplasm</location>
    </subcellularLocation>
    <text evidence="1">The presence of both nuclear import and nuclear export signals leads to continuous shuttling between the nucleus and cytoplasm.</text>
</comment>
<comment type="domain">
    <text evidence="1">The RNA-binding motif binds to the RRE, a 240 bp stem-and-loop structure present in incompletely spliced viral pre-mRNAs. This region also contains the NLS which mediates nuclear localization via KPNB1 binding and, when the N-terminal sequence is present, nucleolar targeting. These overlapping functions prevent Rev bound to RRE from undesirable return to the nucleus. When Rev binds the RRE, the NLS becomes masked while the NES remains accessible. The leucine-rich NES mediates binding to human XPO1.</text>
</comment>
<comment type="PTM">
    <text evidence="1">Asymmetrically arginine dimethylated at one site by host PRMT6. Methylation impairs the RNA-binding activity and export of viral RNA from the nucleus to the cytoplasm.</text>
</comment>
<comment type="PTM">
    <text evidence="1">Phosphorylated by protein kinase CK2. Presence of, and maybe binding to the N-terminus of the regulatory beta subunit of CK2 is necessary for CK2-mediated Rev's phosphorylation.</text>
</comment>
<comment type="miscellaneous">
    <text evidence="1">HIV-1 lineages are divided in three main groups, M (for Major), O (for Outlier), and N (for New, or Non-M, Non-O). The vast majority of strains found worldwide belong to the group M. Group O seems to be endemic to and largely confined to Cameroon and neighboring countries in West Central Africa, where these viruses represent a small minority of HIV-1 strains. The group N is represented by a limited number of isolates from Cameroonian persons. The group M is further subdivided in 9 clades or subtypes (A to D, F to H, J and K).</text>
</comment>
<comment type="similarity">
    <text evidence="1">Belongs to the HIV-1 REV protein family.</text>
</comment>
<keyword id="KW-0014">AIDS</keyword>
<keyword id="KW-1035">Host cytoplasm</keyword>
<keyword id="KW-1048">Host nucleus</keyword>
<keyword id="KW-0945">Host-virus interaction</keyword>
<keyword id="KW-0488">Methylation</keyword>
<keyword id="KW-0509">mRNA transport</keyword>
<keyword id="KW-0597">Phosphoprotein</keyword>
<keyword id="KW-0694">RNA-binding</keyword>
<keyword id="KW-0813">Transport</keyword>
<dbReference type="EMBL" id="U88826">
    <property type="protein sequence ID" value="AAC32657.1"/>
    <property type="molecule type" value="Genomic_DNA"/>
</dbReference>
<dbReference type="SMR" id="O41802"/>
<dbReference type="Proteomes" id="UP000128912">
    <property type="component" value="Segment"/>
</dbReference>
<dbReference type="GO" id="GO:0030430">
    <property type="term" value="C:host cell cytoplasm"/>
    <property type="evidence" value="ECO:0007669"/>
    <property type="project" value="UniProtKB-SubCell"/>
</dbReference>
<dbReference type="GO" id="GO:0044196">
    <property type="term" value="C:host cell nucleolus"/>
    <property type="evidence" value="ECO:0007669"/>
    <property type="project" value="UniProtKB-SubCell"/>
</dbReference>
<dbReference type="GO" id="GO:0003700">
    <property type="term" value="F:DNA-binding transcription factor activity"/>
    <property type="evidence" value="ECO:0007669"/>
    <property type="project" value="UniProtKB-UniRule"/>
</dbReference>
<dbReference type="GO" id="GO:0003723">
    <property type="term" value="F:RNA binding"/>
    <property type="evidence" value="ECO:0007669"/>
    <property type="project" value="UniProtKB-UniRule"/>
</dbReference>
<dbReference type="GO" id="GO:0051028">
    <property type="term" value="P:mRNA transport"/>
    <property type="evidence" value="ECO:0007669"/>
    <property type="project" value="UniProtKB-UniRule"/>
</dbReference>
<dbReference type="GO" id="GO:0016032">
    <property type="term" value="P:viral process"/>
    <property type="evidence" value="ECO:0007669"/>
    <property type="project" value="UniProtKB-UniRule"/>
</dbReference>
<dbReference type="Gene3D" id="6.10.140.630">
    <property type="match status" value="1"/>
</dbReference>
<dbReference type="HAMAP" id="MF_04077">
    <property type="entry name" value="REV_HIV1"/>
    <property type="match status" value="1"/>
</dbReference>
<dbReference type="InterPro" id="IPR000625">
    <property type="entry name" value="REV_protein"/>
</dbReference>
<dbReference type="Pfam" id="PF00424">
    <property type="entry name" value="REV"/>
    <property type="match status" value="1"/>
</dbReference>
<proteinExistence type="inferred from homology"/>
<name>REV_HV19N</name>
<sequence>MAGRSGDPDEELLRAVRIIKTLYQSNPYPSPAGTRQARKNRRRRWRARQRQIHSISERILSACLGRPAEPVPFQLPPLEGLSLDCSKDGGTSGTQQPQGTETGVGRPQVLVEPPVVLGSGTKE</sequence>
<protein>
    <recommendedName>
        <fullName evidence="1">Protein Rev</fullName>
    </recommendedName>
    <alternativeName>
        <fullName evidence="1">ART/TRS</fullName>
    </alternativeName>
    <alternativeName>
        <fullName evidence="1">Anti-repression transactivator</fullName>
    </alternativeName>
    <alternativeName>
        <fullName evidence="1">Regulator of expression of viral proteins</fullName>
    </alternativeName>
</protein>
<accession>O41802</accession>
<reference key="1">
    <citation type="journal article" date="1998" name="J. Virol.">
        <title>A comprehensive panel of near-full-length clones and reference sequences for non-subtype B isolates of human immunodeficiency virus type 1.</title>
        <authorList>
            <person name="Gao F."/>
            <person name="Robertson D.L."/>
            <person name="Carruthers C.D."/>
            <person name="Morrison S.G."/>
            <person name="Jian B."/>
            <person name="Chen Y."/>
            <person name="Barre-Sinoussi F."/>
            <person name="Girard M."/>
            <person name="Srinivasan A."/>
            <person name="Abimiku A.G."/>
            <person name="Shaw G.M."/>
            <person name="Sharp P.M."/>
            <person name="Hahn B.H."/>
        </authorList>
    </citation>
    <scope>NUCLEOTIDE SEQUENCE [GENOMIC DNA]</scope>
    <source>
        <strain>92NG083</strain>
    </source>
</reference>
<reference key="2">
    <citation type="journal article" date="1999" name="Arch. Biochem. Biophys.">
        <title>The ins and outs of HIV Rev.</title>
        <authorList>
            <person name="Hope T.J."/>
        </authorList>
    </citation>
    <scope>REVIEW</scope>
</reference>
<feature type="chain" id="PRO_0000244994" description="Protein Rev">
    <location>
        <begin position="1"/>
        <end position="123"/>
    </location>
</feature>
<feature type="region of interest" description="Homomultimerization" evidence="1">
    <location>
        <begin position="18"/>
        <end position="26"/>
    </location>
</feature>
<feature type="region of interest" description="Disordered" evidence="2">
    <location>
        <begin position="24"/>
        <end position="50"/>
    </location>
</feature>
<feature type="region of interest" description="Disordered" evidence="2">
    <location>
        <begin position="79"/>
        <end position="123"/>
    </location>
</feature>
<feature type="short sequence motif" description="Nuclear localization signal and RNA-binding (RRE)" evidence="1">
    <location>
        <begin position="34"/>
        <end position="50"/>
    </location>
</feature>
<feature type="short sequence motif" description="Nuclear export signal and binding to XPO1" evidence="1">
    <location>
        <begin position="73"/>
        <end position="84"/>
    </location>
</feature>
<feature type="compositionally biased region" description="Basic residues" evidence="2">
    <location>
        <begin position="36"/>
        <end position="50"/>
    </location>
</feature>
<feature type="compositionally biased region" description="Low complexity" evidence="2">
    <location>
        <begin position="93"/>
        <end position="105"/>
    </location>
</feature>
<feature type="modified residue" description="Phosphoserine; by host CK2" evidence="1">
    <location>
        <position position="5"/>
    </location>
</feature>
<feature type="modified residue" description="Phosphoserine; by host" evidence="1">
    <location>
        <position position="92"/>
    </location>
</feature>
<organismHost>
    <name type="scientific">Homo sapiens</name>
    <name type="common">Human</name>
    <dbReference type="NCBI Taxonomy" id="9606"/>
</organismHost>